<name>RECA_SHEB5</name>
<organism>
    <name type="scientific">Shewanella baltica (strain OS155 / ATCC BAA-1091)</name>
    <dbReference type="NCBI Taxonomy" id="325240"/>
    <lineage>
        <taxon>Bacteria</taxon>
        <taxon>Pseudomonadati</taxon>
        <taxon>Pseudomonadota</taxon>
        <taxon>Gammaproteobacteria</taxon>
        <taxon>Alteromonadales</taxon>
        <taxon>Shewanellaceae</taxon>
        <taxon>Shewanella</taxon>
    </lineage>
</organism>
<evidence type="ECO:0000255" key="1">
    <source>
        <dbReference type="HAMAP-Rule" id="MF_00268"/>
    </source>
</evidence>
<sequence length="355" mass="37898">MKVDPNKEKALAAVLIQIEKQFGKGSIMKLGEDRSMDVETISTGSLSLDVALGAGGLPMGRIVEIYGPESSGKTTLTLEVIAAAQREGKTCAFIDAEHALDPIYAKKLGVDIDNLLCSQPDTGEQALEICDALTRSGAVDVIVVDSVAALTPKAEIEGEIGDSHMGLAARMMSQAMRKLAGNLKQSNTLLIFINQIRMKIGVMFGNPETTTGGNALKFYASVRLDIRRTGAIKDGDEVVGNETRVKVVKNKVAAPFKQAEFQILYGQGINRTGELVDLGVAHKLIEKAGAWYSYKGDKIGQGRANAGKYLTENPAIATEIDKTLRELLLSNPSALAAKADASTEDNVDLETGEVF</sequence>
<accession>A3D785</accession>
<comment type="function">
    <text evidence="1">Can catalyze the hydrolysis of ATP in the presence of single-stranded DNA, the ATP-dependent uptake of single-stranded DNA by duplex DNA, and the ATP-dependent hybridization of homologous single-stranded DNAs. It interacts with LexA causing its activation and leading to its autocatalytic cleavage.</text>
</comment>
<comment type="subcellular location">
    <subcellularLocation>
        <location evidence="1">Cytoplasm</location>
    </subcellularLocation>
</comment>
<comment type="similarity">
    <text evidence="1">Belongs to the RecA family.</text>
</comment>
<gene>
    <name evidence="1" type="primary">recA</name>
    <name type="ordered locus">Sbal_3117</name>
</gene>
<dbReference type="EMBL" id="CP000563">
    <property type="protein sequence ID" value="ABN62598.1"/>
    <property type="molecule type" value="Genomic_DNA"/>
</dbReference>
<dbReference type="RefSeq" id="WP_011847432.1">
    <property type="nucleotide sequence ID" value="NC_009052.1"/>
</dbReference>
<dbReference type="SMR" id="A3D785"/>
<dbReference type="STRING" id="325240.Sbal_3117"/>
<dbReference type="KEGG" id="sbl:Sbal_3117"/>
<dbReference type="HOGENOM" id="CLU_040469_3_2_6"/>
<dbReference type="OrthoDB" id="9776733at2"/>
<dbReference type="Proteomes" id="UP000001557">
    <property type="component" value="Chromosome"/>
</dbReference>
<dbReference type="GO" id="GO:0005829">
    <property type="term" value="C:cytosol"/>
    <property type="evidence" value="ECO:0007669"/>
    <property type="project" value="TreeGrafter"/>
</dbReference>
<dbReference type="GO" id="GO:0005524">
    <property type="term" value="F:ATP binding"/>
    <property type="evidence" value="ECO:0007669"/>
    <property type="project" value="UniProtKB-UniRule"/>
</dbReference>
<dbReference type="GO" id="GO:0016887">
    <property type="term" value="F:ATP hydrolysis activity"/>
    <property type="evidence" value="ECO:0007669"/>
    <property type="project" value="InterPro"/>
</dbReference>
<dbReference type="GO" id="GO:0140664">
    <property type="term" value="F:ATP-dependent DNA damage sensor activity"/>
    <property type="evidence" value="ECO:0007669"/>
    <property type="project" value="InterPro"/>
</dbReference>
<dbReference type="GO" id="GO:0003684">
    <property type="term" value="F:damaged DNA binding"/>
    <property type="evidence" value="ECO:0007669"/>
    <property type="project" value="UniProtKB-UniRule"/>
</dbReference>
<dbReference type="GO" id="GO:0003697">
    <property type="term" value="F:single-stranded DNA binding"/>
    <property type="evidence" value="ECO:0007669"/>
    <property type="project" value="UniProtKB-UniRule"/>
</dbReference>
<dbReference type="GO" id="GO:0006310">
    <property type="term" value="P:DNA recombination"/>
    <property type="evidence" value="ECO:0007669"/>
    <property type="project" value="UniProtKB-UniRule"/>
</dbReference>
<dbReference type="GO" id="GO:0006281">
    <property type="term" value="P:DNA repair"/>
    <property type="evidence" value="ECO:0007669"/>
    <property type="project" value="UniProtKB-UniRule"/>
</dbReference>
<dbReference type="GO" id="GO:0009432">
    <property type="term" value="P:SOS response"/>
    <property type="evidence" value="ECO:0007669"/>
    <property type="project" value="UniProtKB-UniRule"/>
</dbReference>
<dbReference type="CDD" id="cd00983">
    <property type="entry name" value="RecA"/>
    <property type="match status" value="1"/>
</dbReference>
<dbReference type="FunFam" id="3.40.50.300:FF:000087">
    <property type="entry name" value="Recombinase RecA"/>
    <property type="match status" value="1"/>
</dbReference>
<dbReference type="Gene3D" id="3.40.50.300">
    <property type="entry name" value="P-loop containing nucleotide triphosphate hydrolases"/>
    <property type="match status" value="1"/>
</dbReference>
<dbReference type="HAMAP" id="MF_00268">
    <property type="entry name" value="RecA"/>
    <property type="match status" value="1"/>
</dbReference>
<dbReference type="InterPro" id="IPR003593">
    <property type="entry name" value="AAA+_ATPase"/>
</dbReference>
<dbReference type="InterPro" id="IPR013765">
    <property type="entry name" value="DNA_recomb/repair_RecA"/>
</dbReference>
<dbReference type="InterPro" id="IPR020584">
    <property type="entry name" value="DNA_recomb/repair_RecA_CS"/>
</dbReference>
<dbReference type="InterPro" id="IPR027417">
    <property type="entry name" value="P-loop_NTPase"/>
</dbReference>
<dbReference type="InterPro" id="IPR049261">
    <property type="entry name" value="RecA-like_C"/>
</dbReference>
<dbReference type="InterPro" id="IPR049428">
    <property type="entry name" value="RecA-like_N"/>
</dbReference>
<dbReference type="InterPro" id="IPR020588">
    <property type="entry name" value="RecA_ATP-bd"/>
</dbReference>
<dbReference type="InterPro" id="IPR023400">
    <property type="entry name" value="RecA_C_sf"/>
</dbReference>
<dbReference type="InterPro" id="IPR020587">
    <property type="entry name" value="RecA_monomer-monomer_interface"/>
</dbReference>
<dbReference type="NCBIfam" id="TIGR02012">
    <property type="entry name" value="tigrfam_recA"/>
    <property type="match status" value="1"/>
</dbReference>
<dbReference type="PANTHER" id="PTHR45900:SF1">
    <property type="entry name" value="MITOCHONDRIAL DNA REPAIR PROTEIN RECA HOMOLOG-RELATED"/>
    <property type="match status" value="1"/>
</dbReference>
<dbReference type="PANTHER" id="PTHR45900">
    <property type="entry name" value="RECA"/>
    <property type="match status" value="1"/>
</dbReference>
<dbReference type="Pfam" id="PF00154">
    <property type="entry name" value="RecA"/>
    <property type="match status" value="1"/>
</dbReference>
<dbReference type="Pfam" id="PF21096">
    <property type="entry name" value="RecA_C"/>
    <property type="match status" value="1"/>
</dbReference>
<dbReference type="PRINTS" id="PR00142">
    <property type="entry name" value="RECA"/>
</dbReference>
<dbReference type="SMART" id="SM00382">
    <property type="entry name" value="AAA"/>
    <property type="match status" value="1"/>
</dbReference>
<dbReference type="SUPFAM" id="SSF52540">
    <property type="entry name" value="P-loop containing nucleoside triphosphate hydrolases"/>
    <property type="match status" value="1"/>
</dbReference>
<dbReference type="SUPFAM" id="SSF54752">
    <property type="entry name" value="RecA protein, C-terminal domain"/>
    <property type="match status" value="1"/>
</dbReference>
<dbReference type="PROSITE" id="PS00321">
    <property type="entry name" value="RECA_1"/>
    <property type="match status" value="1"/>
</dbReference>
<dbReference type="PROSITE" id="PS50162">
    <property type="entry name" value="RECA_2"/>
    <property type="match status" value="1"/>
</dbReference>
<dbReference type="PROSITE" id="PS50163">
    <property type="entry name" value="RECA_3"/>
    <property type="match status" value="1"/>
</dbReference>
<feature type="chain" id="PRO_1000047991" description="Protein RecA">
    <location>
        <begin position="1"/>
        <end position="355"/>
    </location>
</feature>
<feature type="binding site" evidence="1">
    <location>
        <begin position="67"/>
        <end position="74"/>
    </location>
    <ligand>
        <name>ATP</name>
        <dbReference type="ChEBI" id="CHEBI:30616"/>
    </ligand>
</feature>
<proteinExistence type="inferred from homology"/>
<protein>
    <recommendedName>
        <fullName evidence="1">Protein RecA</fullName>
    </recommendedName>
    <alternativeName>
        <fullName evidence="1">Recombinase A</fullName>
    </alternativeName>
</protein>
<reference key="1">
    <citation type="submission" date="2007-02" db="EMBL/GenBank/DDBJ databases">
        <title>Complete sequence of chromosome of Shewanella baltica OS155.</title>
        <authorList>
            <consortium name="US DOE Joint Genome Institute"/>
            <person name="Copeland A."/>
            <person name="Lucas S."/>
            <person name="Lapidus A."/>
            <person name="Barry K."/>
            <person name="Detter J.C."/>
            <person name="Glavina del Rio T."/>
            <person name="Hammon N."/>
            <person name="Israni S."/>
            <person name="Dalin E."/>
            <person name="Tice H."/>
            <person name="Pitluck S."/>
            <person name="Sims D.R."/>
            <person name="Brettin T."/>
            <person name="Bruce D."/>
            <person name="Han C."/>
            <person name="Tapia R."/>
            <person name="Brainard J."/>
            <person name="Schmutz J."/>
            <person name="Larimer F."/>
            <person name="Land M."/>
            <person name="Hauser L."/>
            <person name="Kyrpides N."/>
            <person name="Mikhailova N."/>
            <person name="Brettar I."/>
            <person name="Klappenbach J."/>
            <person name="Konstantinidis K."/>
            <person name="Rodrigues J."/>
            <person name="Tiedje J."/>
            <person name="Richardson P."/>
        </authorList>
    </citation>
    <scope>NUCLEOTIDE SEQUENCE [LARGE SCALE GENOMIC DNA]</scope>
    <source>
        <strain>OS155 / ATCC BAA-1091</strain>
    </source>
</reference>
<keyword id="KW-0067">ATP-binding</keyword>
<keyword id="KW-0963">Cytoplasm</keyword>
<keyword id="KW-0227">DNA damage</keyword>
<keyword id="KW-0233">DNA recombination</keyword>
<keyword id="KW-0234">DNA repair</keyword>
<keyword id="KW-0238">DNA-binding</keyword>
<keyword id="KW-0547">Nucleotide-binding</keyword>
<keyword id="KW-1185">Reference proteome</keyword>
<keyword id="KW-0742">SOS response</keyword>